<dbReference type="EC" id="3.1.1.22" evidence="1"/>
<dbReference type="EMBL" id="D85373">
    <property type="protein sequence ID" value="BAA20331.1"/>
    <property type="status" value="ALT_SEQ"/>
    <property type="molecule type" value="Genomic_DNA"/>
</dbReference>
<dbReference type="UniPathway" id="UPA00863"/>
<dbReference type="GO" id="GO:0005615">
    <property type="term" value="C:extracellular space"/>
    <property type="evidence" value="ECO:0007669"/>
    <property type="project" value="InterPro"/>
</dbReference>
<dbReference type="GO" id="GO:0047989">
    <property type="term" value="F:hydroxybutyrate-dimer hydrolase activity"/>
    <property type="evidence" value="ECO:0007669"/>
    <property type="project" value="UniProtKB-UniRule"/>
</dbReference>
<dbReference type="GO" id="GO:0019605">
    <property type="term" value="P:butyrate metabolic process"/>
    <property type="evidence" value="ECO:0007669"/>
    <property type="project" value="UniProtKB-UniRule"/>
</dbReference>
<dbReference type="HAMAP" id="MF_01906">
    <property type="entry name" value="3HBOH"/>
    <property type="match status" value="1"/>
</dbReference>
<dbReference type="InterPro" id="IPR016582">
    <property type="entry name" value="OHBut_olig_hydro_put"/>
</dbReference>
<dbReference type="Pfam" id="PF10605">
    <property type="entry name" value="3HBOH"/>
    <property type="match status" value="1"/>
</dbReference>
<dbReference type="PIRSF" id="PIRSF011409">
    <property type="entry name" value="HObutyrate_olig_hydrol"/>
    <property type="match status" value="1"/>
</dbReference>
<protein>
    <recommendedName>
        <fullName evidence="1">D-(-)-3-hydroxybutyrate oligomer hydrolase</fullName>
        <shortName evidence="1">3HB-oligomer hydrolase</shortName>
        <shortName evidence="1">3HBOH</shortName>
        <ecNumber evidence="1">3.1.1.22</ecNumber>
    </recommendedName>
    <alternativeName>
        <fullName>Extracellular 3HB-oligomer hydrolase</fullName>
        <shortName>e3HBOH</shortName>
    </alternativeName>
</protein>
<reference key="1">
    <citation type="journal article" date="1997" name="J. Bacteriol.">
        <title>Purification of an extracellular D-(-)-3-hydroxybutyrate oligomer hydrolase from Pseudomonas sp. strain A1 and cloning and sequencing of its gene.</title>
        <authorList>
            <person name="Zhang K."/>
            <person name="Shiraki M."/>
            <person name="Saito T."/>
        </authorList>
    </citation>
    <scope>NUCLEOTIDE SEQUENCE [GENOMIC DNA]</scope>
    <scope>FUNCTION</scope>
    <scope>SUBCELLULAR LOCATION</scope>
    <scope>ACTIVITY REGULATION</scope>
    <scope>BIOPHYSICOCHEMICAL PROPERTIES</scope>
    <source>
        <strain>A1</strain>
    </source>
</reference>
<accession>O05690</accession>
<feature type="signal peptide" evidence="1">
    <location>
        <begin position="1"/>
        <end position="25"/>
    </location>
</feature>
<feature type="chain" id="PRO_0000314419" description="D-(-)-3-hydroxybutyrate oligomer hydrolase">
    <location>
        <begin position="26"/>
        <end position="722"/>
    </location>
</feature>
<feature type="active site" description="Charge relay system" evidence="1">
    <location>
        <position position="319"/>
    </location>
</feature>
<name>HBOH1_RALPI</name>
<evidence type="ECO:0000255" key="1">
    <source>
        <dbReference type="HAMAP-Rule" id="MF_01906"/>
    </source>
</evidence>
<evidence type="ECO:0000269" key="2">
    <source>
    </source>
</evidence>
<evidence type="ECO:0000305" key="3"/>
<sequence>MKTMQGKGSGRRLRGALLVTMAASGAIGLAGCGGSNDNTTTTTPTNVKPSFVGTVTVTHFDGVSDDLLTAGLGAAGLASATAPTVANATAPTAAELRRLAIYNNYRALVDTNAKGGYGTLYGPNVDASGNVTSGSGMVPGVEYVAYSDDGSGQQNVVLLVQIPDAFDAANPCIITATSSGSRGIYGAISTGEWGLKRKCAVAYTDKGTRAGPHDLATDTVPLQDGTRTTRAAAGSKAQFAAPLTDTQLAAFNLATPNRLAFKHAHSQRNPEKDWGRFTLQAVQFAFWAINDKLSGGSAPNGSALAVRPDNTIVIASSVSNGGGAAIAAAEQDTTHLIDGVAVGEPGLNLPASANVQVQRGGVTLPVTGKPLFDYVSYANAFRLCAALSSSVSGAPTQSFFAGNIGWPASVQANRCAALHANGLLSSTTTAAQADEALQKMRTYGWEPESDLVHASMAYFEIDPSVATTFGNALARASVLDNLCNFSFAAVDTSFHPTTVNATALAQLASTGNGIPPTTGVQLINNLAQGGATQSKQSVDSSGTQAANLDGALCLRKLLTGADAASQALQLGISQTLRTGNLGGRPALIVQGRNDALLPVNHGARPYLGLNAQVDTSSKLSYIEVTNAQHFDGFIDLVPGYDTLFVPLVLYEQRALDAVYANLKNGTPLPPSQVVRTTPRGGTAGSAPAIAATNVPNFTNTPAVADRISVSVSGGVATVSVPN</sequence>
<keyword id="KW-0378">Hydrolase</keyword>
<keyword id="KW-0964">Secreted</keyword>
<keyword id="KW-0732">Signal</keyword>
<organism>
    <name type="scientific">Ralstonia pickettii</name>
    <name type="common">Burkholderia pickettii</name>
    <dbReference type="NCBI Taxonomy" id="329"/>
    <lineage>
        <taxon>Bacteria</taxon>
        <taxon>Pseudomonadati</taxon>
        <taxon>Pseudomonadota</taxon>
        <taxon>Betaproteobacteria</taxon>
        <taxon>Burkholderiales</taxon>
        <taxon>Burkholderiaceae</taxon>
        <taxon>Ralstonia</taxon>
    </lineage>
</organism>
<comment type="function">
    <text evidence="1 2">Participates in the degradation of poly-3-hydroxybutyrate (PHB). It works downstream of poly(3-hydroxybutyrate) depolymerase, hydrolyzing D(-)-3-hydroxybutyrate oligomers of various length (3HB-oligomers) into 3HB-monomers.</text>
</comment>
<comment type="catalytic activity">
    <reaction evidence="1">
        <text>(3R)-hydroxybutanoate dimer + H2O = 2 (R)-3-hydroxybutanoate + H(+)</text>
        <dbReference type="Rhea" id="RHEA:10172"/>
        <dbReference type="ChEBI" id="CHEBI:10979"/>
        <dbReference type="ChEBI" id="CHEBI:10983"/>
        <dbReference type="ChEBI" id="CHEBI:15377"/>
        <dbReference type="ChEBI" id="CHEBI:15378"/>
        <dbReference type="EC" id="3.1.1.22"/>
    </reaction>
</comment>
<comment type="activity regulation">
    <text evidence="2">Inhibited by diisopropylfluorophosphate (DFP).</text>
</comment>
<comment type="biophysicochemical properties">
    <kinetics>
        <KM evidence="2">0.18 mM for 3HB-dimer</KM>
        <KM evidence="2">0.17 mM for 3HB-trimer</KM>
        <Vmax evidence="2">25.0 umol/min/mg enzyme with 3HB-dimer as substrate</Vmax>
        <Vmax evidence="2">30.0 umol/min/mg enzyme with 3HB-trimer as substrate</Vmax>
    </kinetics>
    <phDependence>
        <text evidence="2">Optimum pH is 7-8.5.</text>
    </phDependence>
</comment>
<comment type="pathway">
    <text evidence="1">Lipid metabolism; butanoate metabolism.</text>
</comment>
<comment type="subcellular location">
    <subcellularLocation>
        <location evidence="1 2">Secreted</location>
    </subcellularLocation>
</comment>
<comment type="similarity">
    <text evidence="1">Belongs to the D-(-)-3-hydroxybutyrate oligomer hydrolase family.</text>
</comment>
<comment type="sequence caution" evidence="3">
    <conflict type="miscellaneous discrepancy">
        <sequence resource="EMBL-CDS" id="BAA20331"/>
    </conflict>
</comment>
<proteinExistence type="evidence at protein level"/>